<evidence type="ECO:0000255" key="1">
    <source>
        <dbReference type="HAMAP-Rule" id="MF_00658"/>
    </source>
</evidence>
<name>RLMH_PARPJ</name>
<reference key="1">
    <citation type="journal article" date="2011" name="J. Bacteriol.">
        <title>Complete genome sequence of the plant growth-promoting endophyte Burkholderia phytofirmans strain PsJN.</title>
        <authorList>
            <person name="Weilharter A."/>
            <person name="Mitter B."/>
            <person name="Shin M.V."/>
            <person name="Chain P.S."/>
            <person name="Nowak J."/>
            <person name="Sessitsch A."/>
        </authorList>
    </citation>
    <scope>NUCLEOTIDE SEQUENCE [LARGE SCALE GENOMIC DNA]</scope>
    <source>
        <strain>DSM 17436 / LMG 22146 / PsJN</strain>
    </source>
</reference>
<dbReference type="EC" id="2.1.1.177" evidence="1"/>
<dbReference type="EMBL" id="CP001052">
    <property type="protein sequence ID" value="ACD15711.1"/>
    <property type="molecule type" value="Genomic_DNA"/>
</dbReference>
<dbReference type="RefSeq" id="WP_012432331.1">
    <property type="nucleotide sequence ID" value="NC_010681.1"/>
</dbReference>
<dbReference type="SMR" id="B2T2A0"/>
<dbReference type="STRING" id="398527.Bphyt_1296"/>
<dbReference type="KEGG" id="bpy:Bphyt_1296"/>
<dbReference type="eggNOG" id="COG1576">
    <property type="taxonomic scope" value="Bacteria"/>
</dbReference>
<dbReference type="HOGENOM" id="CLU_100552_1_0_4"/>
<dbReference type="OrthoDB" id="9806643at2"/>
<dbReference type="Proteomes" id="UP000001739">
    <property type="component" value="Chromosome 1"/>
</dbReference>
<dbReference type="GO" id="GO:0005737">
    <property type="term" value="C:cytoplasm"/>
    <property type="evidence" value="ECO:0007669"/>
    <property type="project" value="UniProtKB-SubCell"/>
</dbReference>
<dbReference type="GO" id="GO:0070038">
    <property type="term" value="F:rRNA (pseudouridine-N3-)-methyltransferase activity"/>
    <property type="evidence" value="ECO:0007669"/>
    <property type="project" value="UniProtKB-UniRule"/>
</dbReference>
<dbReference type="CDD" id="cd18081">
    <property type="entry name" value="RlmH-like"/>
    <property type="match status" value="1"/>
</dbReference>
<dbReference type="Gene3D" id="3.40.1280.10">
    <property type="match status" value="1"/>
</dbReference>
<dbReference type="HAMAP" id="MF_00658">
    <property type="entry name" value="23SrRNA_methyltr_H"/>
    <property type="match status" value="1"/>
</dbReference>
<dbReference type="InterPro" id="IPR029028">
    <property type="entry name" value="Alpha/beta_knot_MTases"/>
</dbReference>
<dbReference type="InterPro" id="IPR003742">
    <property type="entry name" value="RlmH-like"/>
</dbReference>
<dbReference type="InterPro" id="IPR029026">
    <property type="entry name" value="tRNA_m1G_MTases_N"/>
</dbReference>
<dbReference type="NCBIfam" id="NF000986">
    <property type="entry name" value="PRK00103.1-4"/>
    <property type="match status" value="1"/>
</dbReference>
<dbReference type="NCBIfam" id="TIGR00246">
    <property type="entry name" value="tRNA_RlmH_YbeA"/>
    <property type="match status" value="1"/>
</dbReference>
<dbReference type="PANTHER" id="PTHR33603">
    <property type="entry name" value="METHYLTRANSFERASE"/>
    <property type="match status" value="1"/>
</dbReference>
<dbReference type="PANTHER" id="PTHR33603:SF1">
    <property type="entry name" value="RIBOSOMAL RNA LARGE SUBUNIT METHYLTRANSFERASE H"/>
    <property type="match status" value="1"/>
</dbReference>
<dbReference type="Pfam" id="PF02590">
    <property type="entry name" value="SPOUT_MTase"/>
    <property type="match status" value="1"/>
</dbReference>
<dbReference type="PIRSF" id="PIRSF004505">
    <property type="entry name" value="MT_bac"/>
    <property type="match status" value="1"/>
</dbReference>
<dbReference type="SUPFAM" id="SSF75217">
    <property type="entry name" value="alpha/beta knot"/>
    <property type="match status" value="1"/>
</dbReference>
<keyword id="KW-0963">Cytoplasm</keyword>
<keyword id="KW-0489">Methyltransferase</keyword>
<keyword id="KW-0698">rRNA processing</keyword>
<keyword id="KW-0949">S-adenosyl-L-methionine</keyword>
<keyword id="KW-0808">Transferase</keyword>
<feature type="chain" id="PRO_0000366574" description="Ribosomal RNA large subunit methyltransferase H">
    <location>
        <begin position="1"/>
        <end position="156"/>
    </location>
</feature>
<feature type="binding site" evidence="1">
    <location>
        <position position="73"/>
    </location>
    <ligand>
        <name>S-adenosyl-L-methionine</name>
        <dbReference type="ChEBI" id="CHEBI:59789"/>
    </ligand>
</feature>
<feature type="binding site" evidence="1">
    <location>
        <position position="104"/>
    </location>
    <ligand>
        <name>S-adenosyl-L-methionine</name>
        <dbReference type="ChEBI" id="CHEBI:59789"/>
    </ligand>
</feature>
<feature type="binding site" evidence="1">
    <location>
        <begin position="123"/>
        <end position="128"/>
    </location>
    <ligand>
        <name>S-adenosyl-L-methionine</name>
        <dbReference type="ChEBI" id="CHEBI:59789"/>
    </ligand>
</feature>
<accession>B2T2A0</accession>
<organism>
    <name type="scientific">Paraburkholderia phytofirmans (strain DSM 17436 / LMG 22146 / PsJN)</name>
    <name type="common">Burkholderia phytofirmans</name>
    <dbReference type="NCBI Taxonomy" id="398527"/>
    <lineage>
        <taxon>Bacteria</taxon>
        <taxon>Pseudomonadati</taxon>
        <taxon>Pseudomonadota</taxon>
        <taxon>Betaproteobacteria</taxon>
        <taxon>Burkholderiales</taxon>
        <taxon>Burkholderiaceae</taxon>
        <taxon>Paraburkholderia</taxon>
    </lineage>
</organism>
<gene>
    <name evidence="1" type="primary">rlmH</name>
    <name type="ordered locus">Bphyt_1296</name>
</gene>
<sequence length="156" mass="17660">MKLHILAVGHKMPDWIATGFDEYTKRMPPELRIELREIKPEQRSSGRQADSVMAAERLKIEAALPKNARIVALDERGKDWTTMQLAGALPGWQQDGRDVAFLIGGADGLDPQLKARSDMLLRVSSLTLPHAMVRVLLAEQLYRAWTITQNHPYHRV</sequence>
<comment type="function">
    <text evidence="1">Specifically methylates the pseudouridine at position 1915 (m3Psi1915) in 23S rRNA.</text>
</comment>
<comment type="catalytic activity">
    <reaction evidence="1">
        <text>pseudouridine(1915) in 23S rRNA + S-adenosyl-L-methionine = N(3)-methylpseudouridine(1915) in 23S rRNA + S-adenosyl-L-homocysteine + H(+)</text>
        <dbReference type="Rhea" id="RHEA:42752"/>
        <dbReference type="Rhea" id="RHEA-COMP:10221"/>
        <dbReference type="Rhea" id="RHEA-COMP:10222"/>
        <dbReference type="ChEBI" id="CHEBI:15378"/>
        <dbReference type="ChEBI" id="CHEBI:57856"/>
        <dbReference type="ChEBI" id="CHEBI:59789"/>
        <dbReference type="ChEBI" id="CHEBI:65314"/>
        <dbReference type="ChEBI" id="CHEBI:74486"/>
        <dbReference type="EC" id="2.1.1.177"/>
    </reaction>
</comment>
<comment type="subunit">
    <text evidence="1">Homodimer.</text>
</comment>
<comment type="subcellular location">
    <subcellularLocation>
        <location evidence="1">Cytoplasm</location>
    </subcellularLocation>
</comment>
<comment type="similarity">
    <text evidence="1">Belongs to the RNA methyltransferase RlmH family.</text>
</comment>
<protein>
    <recommendedName>
        <fullName evidence="1">Ribosomal RNA large subunit methyltransferase H</fullName>
        <ecNumber evidence="1">2.1.1.177</ecNumber>
    </recommendedName>
    <alternativeName>
        <fullName evidence="1">23S rRNA (pseudouridine1915-N3)-methyltransferase</fullName>
    </alternativeName>
    <alternativeName>
        <fullName evidence="1">23S rRNA m3Psi1915 methyltransferase</fullName>
    </alternativeName>
    <alternativeName>
        <fullName evidence="1">rRNA (pseudouridine-N3-)-methyltransferase RlmH</fullName>
    </alternativeName>
</protein>
<proteinExistence type="inferred from homology"/>